<feature type="chain" id="PRO_0000336571" description="Hydroxyethylthiazole kinase">
    <location>
        <begin position="1"/>
        <end position="264"/>
    </location>
</feature>
<feature type="binding site" evidence="1">
    <location>
        <position position="52"/>
    </location>
    <ligand>
        <name>substrate</name>
    </ligand>
</feature>
<feature type="binding site" evidence="1">
    <location>
        <position position="127"/>
    </location>
    <ligand>
        <name>ATP</name>
        <dbReference type="ChEBI" id="CHEBI:30616"/>
    </ligand>
</feature>
<feature type="binding site" evidence="1">
    <location>
        <position position="173"/>
    </location>
    <ligand>
        <name>ATP</name>
        <dbReference type="ChEBI" id="CHEBI:30616"/>
    </ligand>
</feature>
<feature type="binding site" evidence="1">
    <location>
        <position position="200"/>
    </location>
    <ligand>
        <name>substrate</name>
    </ligand>
</feature>
<organism>
    <name type="scientific">Serratia proteamaculans (strain 568)</name>
    <dbReference type="NCBI Taxonomy" id="399741"/>
    <lineage>
        <taxon>Bacteria</taxon>
        <taxon>Pseudomonadati</taxon>
        <taxon>Pseudomonadota</taxon>
        <taxon>Gammaproteobacteria</taxon>
        <taxon>Enterobacterales</taxon>
        <taxon>Yersiniaceae</taxon>
        <taxon>Serratia</taxon>
    </lineage>
</organism>
<protein>
    <recommendedName>
        <fullName evidence="1">Hydroxyethylthiazole kinase</fullName>
        <ecNumber evidence="1">2.7.1.50</ecNumber>
    </recommendedName>
    <alternativeName>
        <fullName evidence="1">4-methyl-5-beta-hydroxyethylthiazole kinase</fullName>
        <shortName evidence="1">TH kinase</shortName>
        <shortName evidence="1">Thz kinase</shortName>
    </alternativeName>
</protein>
<gene>
    <name evidence="1" type="primary">thiM</name>
    <name type="ordered locus">Spro_3578</name>
</gene>
<evidence type="ECO:0000255" key="1">
    <source>
        <dbReference type="HAMAP-Rule" id="MF_00228"/>
    </source>
</evidence>
<accession>A8GHT4</accession>
<sequence length="264" mass="27151">MLARPDVFPGARAAACLTQFKRQSPLIHCLTNEVVQELTANVLLALGASPAMVVEPTEAAQFSRLADALLINIGTLNASRAESMLAAIEAANAAGTPWTLDPVAVGGLAYRTAFAQSLLGEKPAAIRGNASEIMALSGLQASGRGVDSADDSLAALPAARELARNSGAVVAVTGVVDYITDGQRDWAVAGGDVLMTRVVGTGCALSAVVAAFCSLPGDRLDNVATACRVMSHCGEMATRRAAGPGSFTPAFLDALYQLRPEDLQ</sequence>
<comment type="function">
    <text evidence="1">Catalyzes the phosphorylation of the hydroxyl group of 4-methyl-5-beta-hydroxyethylthiazole (THZ).</text>
</comment>
<comment type="catalytic activity">
    <reaction evidence="1">
        <text>5-(2-hydroxyethyl)-4-methylthiazole + ATP = 4-methyl-5-(2-phosphooxyethyl)-thiazole + ADP + H(+)</text>
        <dbReference type="Rhea" id="RHEA:24212"/>
        <dbReference type="ChEBI" id="CHEBI:15378"/>
        <dbReference type="ChEBI" id="CHEBI:17957"/>
        <dbReference type="ChEBI" id="CHEBI:30616"/>
        <dbReference type="ChEBI" id="CHEBI:58296"/>
        <dbReference type="ChEBI" id="CHEBI:456216"/>
        <dbReference type="EC" id="2.7.1.50"/>
    </reaction>
</comment>
<comment type="cofactor">
    <cofactor evidence="1">
        <name>Mg(2+)</name>
        <dbReference type="ChEBI" id="CHEBI:18420"/>
    </cofactor>
</comment>
<comment type="pathway">
    <text evidence="1">Cofactor biosynthesis; thiamine diphosphate biosynthesis; 4-methyl-5-(2-phosphoethyl)-thiazole from 5-(2-hydroxyethyl)-4-methylthiazole: step 1/1.</text>
</comment>
<comment type="similarity">
    <text evidence="1">Belongs to the Thz kinase family.</text>
</comment>
<proteinExistence type="inferred from homology"/>
<name>THIM_SERP5</name>
<dbReference type="EC" id="2.7.1.50" evidence="1"/>
<dbReference type="EMBL" id="CP000826">
    <property type="protein sequence ID" value="ABV42674.1"/>
    <property type="molecule type" value="Genomic_DNA"/>
</dbReference>
<dbReference type="SMR" id="A8GHT4"/>
<dbReference type="STRING" id="399741.Spro_3578"/>
<dbReference type="KEGG" id="spe:Spro_3578"/>
<dbReference type="eggNOG" id="COG2145">
    <property type="taxonomic scope" value="Bacteria"/>
</dbReference>
<dbReference type="HOGENOM" id="CLU_019943_0_1_6"/>
<dbReference type="OrthoDB" id="8909021at2"/>
<dbReference type="UniPathway" id="UPA00060">
    <property type="reaction ID" value="UER00139"/>
</dbReference>
<dbReference type="GO" id="GO:0005524">
    <property type="term" value="F:ATP binding"/>
    <property type="evidence" value="ECO:0007669"/>
    <property type="project" value="UniProtKB-UniRule"/>
</dbReference>
<dbReference type="GO" id="GO:0004417">
    <property type="term" value="F:hydroxyethylthiazole kinase activity"/>
    <property type="evidence" value="ECO:0007669"/>
    <property type="project" value="UniProtKB-UniRule"/>
</dbReference>
<dbReference type="GO" id="GO:0000287">
    <property type="term" value="F:magnesium ion binding"/>
    <property type="evidence" value="ECO:0007669"/>
    <property type="project" value="UniProtKB-UniRule"/>
</dbReference>
<dbReference type="GO" id="GO:0009228">
    <property type="term" value="P:thiamine biosynthetic process"/>
    <property type="evidence" value="ECO:0007669"/>
    <property type="project" value="UniProtKB-KW"/>
</dbReference>
<dbReference type="GO" id="GO:0009229">
    <property type="term" value="P:thiamine diphosphate biosynthetic process"/>
    <property type="evidence" value="ECO:0007669"/>
    <property type="project" value="UniProtKB-UniRule"/>
</dbReference>
<dbReference type="CDD" id="cd01170">
    <property type="entry name" value="THZ_kinase"/>
    <property type="match status" value="1"/>
</dbReference>
<dbReference type="FunFam" id="3.40.1190.20:FF:000015">
    <property type="entry name" value="Hydroxyethylthiazole kinase"/>
    <property type="match status" value="1"/>
</dbReference>
<dbReference type="Gene3D" id="3.40.1190.20">
    <property type="match status" value="1"/>
</dbReference>
<dbReference type="HAMAP" id="MF_00228">
    <property type="entry name" value="Thz_kinase"/>
    <property type="match status" value="1"/>
</dbReference>
<dbReference type="InterPro" id="IPR000417">
    <property type="entry name" value="Hyethyz_kinase"/>
</dbReference>
<dbReference type="InterPro" id="IPR029056">
    <property type="entry name" value="Ribokinase-like"/>
</dbReference>
<dbReference type="NCBIfam" id="NF006830">
    <property type="entry name" value="PRK09355.1"/>
    <property type="match status" value="1"/>
</dbReference>
<dbReference type="NCBIfam" id="TIGR00694">
    <property type="entry name" value="thiM"/>
    <property type="match status" value="1"/>
</dbReference>
<dbReference type="Pfam" id="PF02110">
    <property type="entry name" value="HK"/>
    <property type="match status" value="1"/>
</dbReference>
<dbReference type="PIRSF" id="PIRSF000513">
    <property type="entry name" value="Thz_kinase"/>
    <property type="match status" value="1"/>
</dbReference>
<dbReference type="PRINTS" id="PR01099">
    <property type="entry name" value="HYETHTZKNASE"/>
</dbReference>
<dbReference type="SUPFAM" id="SSF53613">
    <property type="entry name" value="Ribokinase-like"/>
    <property type="match status" value="1"/>
</dbReference>
<reference key="1">
    <citation type="submission" date="2007-09" db="EMBL/GenBank/DDBJ databases">
        <title>Complete sequence of chromosome of Serratia proteamaculans 568.</title>
        <authorList>
            <consortium name="US DOE Joint Genome Institute"/>
            <person name="Copeland A."/>
            <person name="Lucas S."/>
            <person name="Lapidus A."/>
            <person name="Barry K."/>
            <person name="Glavina del Rio T."/>
            <person name="Dalin E."/>
            <person name="Tice H."/>
            <person name="Pitluck S."/>
            <person name="Chain P."/>
            <person name="Malfatti S."/>
            <person name="Shin M."/>
            <person name="Vergez L."/>
            <person name="Schmutz J."/>
            <person name="Larimer F."/>
            <person name="Land M."/>
            <person name="Hauser L."/>
            <person name="Kyrpides N."/>
            <person name="Kim E."/>
            <person name="Taghavi S."/>
            <person name="Newman L."/>
            <person name="Vangronsveld J."/>
            <person name="van der Lelie D."/>
            <person name="Richardson P."/>
        </authorList>
    </citation>
    <scope>NUCLEOTIDE SEQUENCE [LARGE SCALE GENOMIC DNA]</scope>
    <source>
        <strain>568</strain>
    </source>
</reference>
<keyword id="KW-0067">ATP-binding</keyword>
<keyword id="KW-0418">Kinase</keyword>
<keyword id="KW-0460">Magnesium</keyword>
<keyword id="KW-0479">Metal-binding</keyword>
<keyword id="KW-0547">Nucleotide-binding</keyword>
<keyword id="KW-0784">Thiamine biosynthesis</keyword>
<keyword id="KW-0808">Transferase</keyword>